<organism>
    <name type="scientific">Acremonium sp</name>
    <dbReference type="NCBI Taxonomy" id="2046025"/>
    <lineage>
        <taxon>Eukaryota</taxon>
        <taxon>Fungi</taxon>
        <taxon>Dikarya</taxon>
        <taxon>Ascomycota</taxon>
        <taxon>Pezizomycotina</taxon>
        <taxon>Sordariomycetes</taxon>
        <taxon>Hypocreomycetidae</taxon>
        <taxon>Hypocreales</taxon>
        <taxon>Hypocreales incertae sedis</taxon>
        <taxon>Acremonium</taxon>
    </lineage>
</organism>
<protein>
    <recommendedName>
        <fullName evidence="2">Oxidase ucsJ</fullName>
        <ecNumber evidence="4">1.-.-.-</ecNumber>
    </recommendedName>
    <alternativeName>
        <fullName evidence="2">UCS1025A pyrrolizidinone biosynthesis cluster protein J</fullName>
    </alternativeName>
</protein>
<feature type="chain" id="PRO_0000450541" description="Oxidase ucsJ">
    <location>
        <begin position="1"/>
        <end position="348"/>
    </location>
</feature>
<reference key="1">
    <citation type="journal article" date="2018" name="J. Am. Chem. Soc.">
        <title>Genome mining and assembly-line biosynthesis of the UCS1025A pyrrolizidinone family of fungal alkaloids.</title>
        <authorList>
            <person name="Li L."/>
            <person name="Tang M.C."/>
            <person name="Tang S."/>
            <person name="Gao S."/>
            <person name="Soliman S."/>
            <person name="Hang L."/>
            <person name="Xu W."/>
            <person name="Ye T."/>
            <person name="Watanabe K."/>
            <person name="Tang Y."/>
        </authorList>
    </citation>
    <scope>NUCLEOTIDE SEQUENCE [GENOMIC DNA]</scope>
    <scope>FUNCTION</scope>
    <scope>DISRUPTION PHENOTYPE</scope>
    <scope>PATHWAY</scope>
    <source>
        <strain>KY4917</strain>
    </source>
</reference>
<keyword id="KW-0560">Oxidoreductase</keyword>
<gene>
    <name evidence="2" type="primary">ucsJ</name>
</gene>
<comment type="function">
    <text evidence="1 4">Oxidase; part of the gene cluster that mediates the biosynthesis of UCS1025A, a member of the pyrrolizidinone family that acts as a strong telomerase inhibitor and displays potent antibacterial and antitumor properties (PubMed:29373009). These compounds share a hemiaminal-containing pyrrolizidinone core fused with a gamma-lactone, giving a furopyrrolizidine that is connected to a decalin fragment (PubMed:29373009). The polyketide synthase module (PKS) of the PKS-NRPS ucsA is responsible for the synthesis of the polyketide backbone via the condensation of an acetyl-CoA starter unit with 6 malonyl-CoA units (PubMed:29373009). The downstream nonribosomal peptide synthetase (NRPS) module then amidates the carboxyl end of the polyketide with a 2S,3S-methylproline derived from L-isoleucine by the 2-oxoglutarate-dependent dioxygenase ucsF which converts L-isoleucine to (4S,5S)-4-methylpyrroline-5-carboxylate that is further converted to 2S,3S-methylproline by the pyrroline-5-carboxylate reductase ucsG (PubMed:29373009). Reductive release of the completed aminoacyl polyketide from the assembly line can form the 3-pyrrolin-2-one structure via an intramolecular Knoevenagel reaction (PubMed:29373009). Because ucsA lacks a designated enoylreductase (ER) domain, the required activity is provided the enoyl reductase ucsL (PubMed:29373009). This keto acyclic precursor is the substrate of the Diels-Alderase ucsH, that catalyzes the Diels-Alder cycloaddition (PubMed:29373009). Oxidation of the 3S-methyl group to a carboxylate by the cytochrome P450 monooxygenase ucsK allows an oxa-Michael cyclization that might involve the reductase/dehydrogenase ucsI and which furnishes the furopyrrolizidine (PubMed:29373009). The oxidase ucsJ likely plays a critical role in stereoselective reduction of the C5-C6 double bond to afford the required R-configured carboxylate group (Probable). Further enolization and oxidation at C5 by an unidentified enzyme affords the last intermediate that can undergo oxa-Michael cyclization to yield UCS1025A (Probable).</text>
</comment>
<comment type="pathway">
    <text evidence="1">Mycotoxin biosynthesis.</text>
</comment>
<comment type="disruption phenotype">
    <text evidence="1">Leads to the accumulation of a shunt product in which a double bond is introduced between C5 and C6, thereby scrambling the existing stereochemistry at both positions.</text>
</comment>
<comment type="similarity">
    <text evidence="3">Belongs to the avfA family.</text>
</comment>
<accession>A0A411KUU5</accession>
<evidence type="ECO:0000269" key="1">
    <source>
    </source>
</evidence>
<evidence type="ECO:0000303" key="2">
    <source>
    </source>
</evidence>
<evidence type="ECO:0000305" key="3"/>
<evidence type="ECO:0000305" key="4">
    <source>
    </source>
</evidence>
<dbReference type="EC" id="1.-.-.-" evidence="4"/>
<dbReference type="EMBL" id="MH375773">
    <property type="protein sequence ID" value="QBC88154.1"/>
    <property type="molecule type" value="Genomic_DNA"/>
</dbReference>
<dbReference type="SMR" id="A0A411KUU5"/>
<dbReference type="GO" id="GO:0005737">
    <property type="term" value="C:cytoplasm"/>
    <property type="evidence" value="ECO:0007669"/>
    <property type="project" value="TreeGrafter"/>
</dbReference>
<dbReference type="GO" id="GO:0004029">
    <property type="term" value="F:aldehyde dehydrogenase (NAD+) activity"/>
    <property type="evidence" value="ECO:0007669"/>
    <property type="project" value="TreeGrafter"/>
</dbReference>
<dbReference type="Gene3D" id="3.40.50.720">
    <property type="entry name" value="NAD(P)-binding Rossmann-like Domain"/>
    <property type="match status" value="1"/>
</dbReference>
<dbReference type="InterPro" id="IPR016040">
    <property type="entry name" value="NAD(P)-bd_dom"/>
</dbReference>
<dbReference type="InterPro" id="IPR036291">
    <property type="entry name" value="NAD(P)-bd_dom_sf"/>
</dbReference>
<dbReference type="InterPro" id="IPR051783">
    <property type="entry name" value="NAD(P)-dependent_oxidoreduct"/>
</dbReference>
<dbReference type="PANTHER" id="PTHR48079:SF6">
    <property type="entry name" value="NAD(P)-BINDING DOMAIN-CONTAINING PROTEIN-RELATED"/>
    <property type="match status" value="1"/>
</dbReference>
<dbReference type="PANTHER" id="PTHR48079">
    <property type="entry name" value="PROTEIN YEEZ"/>
    <property type="match status" value="1"/>
</dbReference>
<dbReference type="Pfam" id="PF13460">
    <property type="entry name" value="NAD_binding_10"/>
    <property type="match status" value="1"/>
</dbReference>
<dbReference type="SUPFAM" id="SSF51735">
    <property type="entry name" value="NAD(P)-binding Rossmann-fold domains"/>
    <property type="match status" value="1"/>
</dbReference>
<sequence>MTKKIFATGATGYIGGDAIYALLSASPEYEVSCLVRSGAKATELVARHPSVRIVDGTLDDLELLEEAAANADIVCNFAHATHEPSVSALAKGLARRQRPGHGYLIHTMGSGTMIYDDVIQRRFGEHSDKVFNDVEGLPEVLAVPDFAKARGAENAVRDVGVKNPDRVRTAVVCTGSAYGPGRGLVEYRTSAIHELVRCTLSRGHALQVGAGKSAWRNVYIRDLSDVFVKLITHATNDEQDSDNTDESVWGGSGGYYFVENGEHVWGELARAISDEAVAQGLIQGGDIESIDAAEAASLAPMCNFFWGCNARVEGRRAARGLNWKPVGPPLVKELEVIVQKEAEKLGLS</sequence>
<name>UCSJ_ACRSP</name>
<proteinExistence type="inferred from homology"/>